<comment type="function">
    <text evidence="1">Specifically methylates the N4 position of cytidine in position 1402 (C1402) of 16S rRNA.</text>
</comment>
<comment type="catalytic activity">
    <reaction evidence="1">
        <text>cytidine(1402) in 16S rRNA + S-adenosyl-L-methionine = N(4)-methylcytidine(1402) in 16S rRNA + S-adenosyl-L-homocysteine + H(+)</text>
        <dbReference type="Rhea" id="RHEA:42928"/>
        <dbReference type="Rhea" id="RHEA-COMP:10286"/>
        <dbReference type="Rhea" id="RHEA-COMP:10287"/>
        <dbReference type="ChEBI" id="CHEBI:15378"/>
        <dbReference type="ChEBI" id="CHEBI:57856"/>
        <dbReference type="ChEBI" id="CHEBI:59789"/>
        <dbReference type="ChEBI" id="CHEBI:74506"/>
        <dbReference type="ChEBI" id="CHEBI:82748"/>
        <dbReference type="EC" id="2.1.1.199"/>
    </reaction>
</comment>
<comment type="subcellular location">
    <subcellularLocation>
        <location evidence="1">Cytoplasm</location>
    </subcellularLocation>
</comment>
<comment type="similarity">
    <text evidence="1">Belongs to the methyltransferase superfamily. RsmH family.</text>
</comment>
<name>RSMH_METPP</name>
<sequence length="318" mass="34315">MNQGVGPWQHTTVLLHEAVDALVHSPDGYYVDGTYGRGGHSRLILSKLSAAGRLLAIDRDPDAVAHATSGAARVTDPRFHIEHAPYSELPALLAARGVSRIDGLLLDIGVSSPQIDNPERGFSFRASGPLDMRMDPTRGESAADYLARADEREIAAVIRDYGEERFATAIARALVARRLAGRPVRTTEELAELVAQAVKTREPGQNPATRTFQALRIFVNAELTQLEQGLAAALQCLKPGGRLVVISFHSLEDRIVKTFIASHSKAVVDRRAPFAPPAPMRLRALARLKPGADEVAANPRARSAILRVAERTDVGIAA</sequence>
<keyword id="KW-0963">Cytoplasm</keyword>
<keyword id="KW-0489">Methyltransferase</keyword>
<keyword id="KW-1185">Reference proteome</keyword>
<keyword id="KW-0698">rRNA processing</keyword>
<keyword id="KW-0949">S-adenosyl-L-methionine</keyword>
<keyword id="KW-0808">Transferase</keyword>
<accession>A2SCX7</accession>
<organism>
    <name type="scientific">Methylibium petroleiphilum (strain ATCC BAA-1232 / LMG 22953 / PM1)</name>
    <dbReference type="NCBI Taxonomy" id="420662"/>
    <lineage>
        <taxon>Bacteria</taxon>
        <taxon>Pseudomonadati</taxon>
        <taxon>Pseudomonadota</taxon>
        <taxon>Betaproteobacteria</taxon>
        <taxon>Burkholderiales</taxon>
        <taxon>Sphaerotilaceae</taxon>
        <taxon>Methylibium</taxon>
    </lineage>
</organism>
<feature type="chain" id="PRO_1000062829" description="Ribosomal RNA small subunit methyltransferase H">
    <location>
        <begin position="1"/>
        <end position="318"/>
    </location>
</feature>
<feature type="binding site" evidence="1">
    <location>
        <begin position="38"/>
        <end position="40"/>
    </location>
    <ligand>
        <name>S-adenosyl-L-methionine</name>
        <dbReference type="ChEBI" id="CHEBI:59789"/>
    </ligand>
</feature>
<feature type="binding site" evidence="1">
    <location>
        <position position="58"/>
    </location>
    <ligand>
        <name>S-adenosyl-L-methionine</name>
        <dbReference type="ChEBI" id="CHEBI:59789"/>
    </ligand>
</feature>
<feature type="binding site" evidence="1">
    <location>
        <position position="86"/>
    </location>
    <ligand>
        <name>S-adenosyl-L-methionine</name>
        <dbReference type="ChEBI" id="CHEBI:59789"/>
    </ligand>
</feature>
<feature type="binding site" evidence="1">
    <location>
        <position position="107"/>
    </location>
    <ligand>
        <name>S-adenosyl-L-methionine</name>
        <dbReference type="ChEBI" id="CHEBI:59789"/>
    </ligand>
</feature>
<feature type="binding site" evidence="1">
    <location>
        <position position="114"/>
    </location>
    <ligand>
        <name>S-adenosyl-L-methionine</name>
        <dbReference type="ChEBI" id="CHEBI:59789"/>
    </ligand>
</feature>
<proteinExistence type="inferred from homology"/>
<dbReference type="EC" id="2.1.1.199" evidence="1"/>
<dbReference type="EMBL" id="CP000555">
    <property type="protein sequence ID" value="ABM93416.1"/>
    <property type="molecule type" value="Genomic_DNA"/>
</dbReference>
<dbReference type="RefSeq" id="WP_011828054.1">
    <property type="nucleotide sequence ID" value="NC_008825.1"/>
</dbReference>
<dbReference type="SMR" id="A2SCX7"/>
<dbReference type="STRING" id="420662.Mpe_A0454"/>
<dbReference type="KEGG" id="mpt:Mpe_A0454"/>
<dbReference type="eggNOG" id="COG0275">
    <property type="taxonomic scope" value="Bacteria"/>
</dbReference>
<dbReference type="HOGENOM" id="CLU_038422_2_0_4"/>
<dbReference type="Proteomes" id="UP000000366">
    <property type="component" value="Chromosome"/>
</dbReference>
<dbReference type="GO" id="GO:0005737">
    <property type="term" value="C:cytoplasm"/>
    <property type="evidence" value="ECO:0007669"/>
    <property type="project" value="UniProtKB-SubCell"/>
</dbReference>
<dbReference type="GO" id="GO:0071424">
    <property type="term" value="F:rRNA (cytosine-N4-)-methyltransferase activity"/>
    <property type="evidence" value="ECO:0007669"/>
    <property type="project" value="UniProtKB-UniRule"/>
</dbReference>
<dbReference type="GO" id="GO:0070475">
    <property type="term" value="P:rRNA base methylation"/>
    <property type="evidence" value="ECO:0007669"/>
    <property type="project" value="UniProtKB-UniRule"/>
</dbReference>
<dbReference type="Gene3D" id="1.10.150.170">
    <property type="entry name" value="Putative methyltransferase TM0872, insert domain"/>
    <property type="match status" value="1"/>
</dbReference>
<dbReference type="Gene3D" id="3.40.50.150">
    <property type="entry name" value="Vaccinia Virus protein VP39"/>
    <property type="match status" value="1"/>
</dbReference>
<dbReference type="HAMAP" id="MF_01007">
    <property type="entry name" value="16SrRNA_methyltr_H"/>
    <property type="match status" value="1"/>
</dbReference>
<dbReference type="InterPro" id="IPR002903">
    <property type="entry name" value="RsmH"/>
</dbReference>
<dbReference type="InterPro" id="IPR023397">
    <property type="entry name" value="SAM-dep_MeTrfase_MraW_recog"/>
</dbReference>
<dbReference type="InterPro" id="IPR029063">
    <property type="entry name" value="SAM-dependent_MTases_sf"/>
</dbReference>
<dbReference type="NCBIfam" id="TIGR00006">
    <property type="entry name" value="16S rRNA (cytosine(1402)-N(4))-methyltransferase RsmH"/>
    <property type="match status" value="1"/>
</dbReference>
<dbReference type="PANTHER" id="PTHR11265:SF0">
    <property type="entry name" value="12S RRNA N4-METHYLCYTIDINE METHYLTRANSFERASE"/>
    <property type="match status" value="1"/>
</dbReference>
<dbReference type="PANTHER" id="PTHR11265">
    <property type="entry name" value="S-ADENOSYL-METHYLTRANSFERASE MRAW"/>
    <property type="match status" value="1"/>
</dbReference>
<dbReference type="Pfam" id="PF01795">
    <property type="entry name" value="Methyltransf_5"/>
    <property type="match status" value="1"/>
</dbReference>
<dbReference type="PIRSF" id="PIRSF004486">
    <property type="entry name" value="MraW"/>
    <property type="match status" value="1"/>
</dbReference>
<dbReference type="SUPFAM" id="SSF81799">
    <property type="entry name" value="Putative methyltransferase TM0872, insert domain"/>
    <property type="match status" value="1"/>
</dbReference>
<dbReference type="SUPFAM" id="SSF53335">
    <property type="entry name" value="S-adenosyl-L-methionine-dependent methyltransferases"/>
    <property type="match status" value="1"/>
</dbReference>
<evidence type="ECO:0000255" key="1">
    <source>
        <dbReference type="HAMAP-Rule" id="MF_01007"/>
    </source>
</evidence>
<protein>
    <recommendedName>
        <fullName evidence="1">Ribosomal RNA small subunit methyltransferase H</fullName>
        <ecNumber evidence="1">2.1.1.199</ecNumber>
    </recommendedName>
    <alternativeName>
        <fullName evidence="1">16S rRNA m(4)C1402 methyltransferase</fullName>
    </alternativeName>
    <alternativeName>
        <fullName evidence="1">rRNA (cytosine-N(4)-)-methyltransferase RsmH</fullName>
    </alternativeName>
</protein>
<reference key="1">
    <citation type="journal article" date="2007" name="J. Bacteriol.">
        <title>Whole-genome analysis of the methyl tert-butyl ether-degrading beta-proteobacterium Methylibium petroleiphilum PM1.</title>
        <authorList>
            <person name="Kane S.R."/>
            <person name="Chakicherla A.Y."/>
            <person name="Chain P.S.G."/>
            <person name="Schmidt R."/>
            <person name="Shin M.W."/>
            <person name="Legler T.C."/>
            <person name="Scow K.M."/>
            <person name="Larimer F.W."/>
            <person name="Lucas S.M."/>
            <person name="Richardson P.M."/>
            <person name="Hristova K.R."/>
        </authorList>
    </citation>
    <scope>NUCLEOTIDE SEQUENCE [LARGE SCALE GENOMIC DNA]</scope>
    <source>
        <strain>ATCC BAA-1232 / LMG 22953 / PM1</strain>
    </source>
</reference>
<gene>
    <name evidence="1" type="primary">rsmH</name>
    <name type="synonym">mraW</name>
    <name type="ordered locus">Mpe_A0454</name>
</gene>